<name>EFG_CLOBL</name>
<feature type="chain" id="PRO_0000335841" description="Elongation factor G">
    <location>
        <begin position="1"/>
        <end position="689"/>
    </location>
</feature>
<feature type="domain" description="tr-type G">
    <location>
        <begin position="9"/>
        <end position="283"/>
    </location>
</feature>
<feature type="binding site" evidence="1">
    <location>
        <begin position="18"/>
        <end position="25"/>
    </location>
    <ligand>
        <name>GTP</name>
        <dbReference type="ChEBI" id="CHEBI:37565"/>
    </ligand>
</feature>
<feature type="binding site" evidence="1">
    <location>
        <begin position="82"/>
        <end position="86"/>
    </location>
    <ligand>
        <name>GTP</name>
        <dbReference type="ChEBI" id="CHEBI:37565"/>
    </ligand>
</feature>
<feature type="binding site" evidence="1">
    <location>
        <begin position="136"/>
        <end position="139"/>
    </location>
    <ligand>
        <name>GTP</name>
        <dbReference type="ChEBI" id="CHEBI:37565"/>
    </ligand>
</feature>
<dbReference type="EMBL" id="CP000728">
    <property type="protein sequence ID" value="ABS39479.1"/>
    <property type="molecule type" value="Genomic_DNA"/>
</dbReference>
<dbReference type="RefSeq" id="WP_012101133.1">
    <property type="nucleotide sequence ID" value="NC_009699.1"/>
</dbReference>
<dbReference type="SMR" id="A7GJ77"/>
<dbReference type="KEGG" id="cbf:CLI_3666"/>
<dbReference type="HOGENOM" id="CLU_002794_4_1_9"/>
<dbReference type="Proteomes" id="UP000002410">
    <property type="component" value="Chromosome"/>
</dbReference>
<dbReference type="GO" id="GO:0005737">
    <property type="term" value="C:cytoplasm"/>
    <property type="evidence" value="ECO:0007669"/>
    <property type="project" value="UniProtKB-SubCell"/>
</dbReference>
<dbReference type="GO" id="GO:0005525">
    <property type="term" value="F:GTP binding"/>
    <property type="evidence" value="ECO:0007669"/>
    <property type="project" value="UniProtKB-UniRule"/>
</dbReference>
<dbReference type="GO" id="GO:0003924">
    <property type="term" value="F:GTPase activity"/>
    <property type="evidence" value="ECO:0007669"/>
    <property type="project" value="InterPro"/>
</dbReference>
<dbReference type="GO" id="GO:0003746">
    <property type="term" value="F:translation elongation factor activity"/>
    <property type="evidence" value="ECO:0007669"/>
    <property type="project" value="UniProtKB-UniRule"/>
</dbReference>
<dbReference type="GO" id="GO:0032790">
    <property type="term" value="P:ribosome disassembly"/>
    <property type="evidence" value="ECO:0007669"/>
    <property type="project" value="TreeGrafter"/>
</dbReference>
<dbReference type="CDD" id="cd01886">
    <property type="entry name" value="EF-G"/>
    <property type="match status" value="1"/>
</dbReference>
<dbReference type="CDD" id="cd16262">
    <property type="entry name" value="EFG_III"/>
    <property type="match status" value="1"/>
</dbReference>
<dbReference type="CDD" id="cd01434">
    <property type="entry name" value="EFG_mtEFG1_IV"/>
    <property type="match status" value="1"/>
</dbReference>
<dbReference type="CDD" id="cd03713">
    <property type="entry name" value="EFG_mtEFG_C"/>
    <property type="match status" value="1"/>
</dbReference>
<dbReference type="CDD" id="cd04088">
    <property type="entry name" value="EFG_mtEFG_II"/>
    <property type="match status" value="1"/>
</dbReference>
<dbReference type="FunFam" id="2.40.30.10:FF:000006">
    <property type="entry name" value="Elongation factor G"/>
    <property type="match status" value="1"/>
</dbReference>
<dbReference type="FunFam" id="3.30.230.10:FF:000003">
    <property type="entry name" value="Elongation factor G"/>
    <property type="match status" value="1"/>
</dbReference>
<dbReference type="FunFam" id="3.30.70.240:FF:000001">
    <property type="entry name" value="Elongation factor G"/>
    <property type="match status" value="1"/>
</dbReference>
<dbReference type="FunFam" id="3.30.70.870:FF:000001">
    <property type="entry name" value="Elongation factor G"/>
    <property type="match status" value="1"/>
</dbReference>
<dbReference type="FunFam" id="3.40.50.300:FF:000029">
    <property type="entry name" value="Elongation factor G"/>
    <property type="match status" value="1"/>
</dbReference>
<dbReference type="Gene3D" id="3.30.230.10">
    <property type="match status" value="1"/>
</dbReference>
<dbReference type="Gene3D" id="3.30.70.240">
    <property type="match status" value="1"/>
</dbReference>
<dbReference type="Gene3D" id="3.30.70.870">
    <property type="entry name" value="Elongation Factor G (Translational Gtpase), domain 3"/>
    <property type="match status" value="1"/>
</dbReference>
<dbReference type="Gene3D" id="3.40.50.300">
    <property type="entry name" value="P-loop containing nucleotide triphosphate hydrolases"/>
    <property type="match status" value="1"/>
</dbReference>
<dbReference type="Gene3D" id="2.40.30.10">
    <property type="entry name" value="Translation factors"/>
    <property type="match status" value="1"/>
</dbReference>
<dbReference type="HAMAP" id="MF_00054_B">
    <property type="entry name" value="EF_G_EF_2_B"/>
    <property type="match status" value="1"/>
</dbReference>
<dbReference type="InterPro" id="IPR053905">
    <property type="entry name" value="EF-G-like_DII"/>
</dbReference>
<dbReference type="InterPro" id="IPR041095">
    <property type="entry name" value="EFG_II"/>
</dbReference>
<dbReference type="InterPro" id="IPR009022">
    <property type="entry name" value="EFG_III"/>
</dbReference>
<dbReference type="InterPro" id="IPR035647">
    <property type="entry name" value="EFG_III/V"/>
</dbReference>
<dbReference type="InterPro" id="IPR047872">
    <property type="entry name" value="EFG_IV"/>
</dbReference>
<dbReference type="InterPro" id="IPR035649">
    <property type="entry name" value="EFG_V"/>
</dbReference>
<dbReference type="InterPro" id="IPR000640">
    <property type="entry name" value="EFG_V-like"/>
</dbReference>
<dbReference type="InterPro" id="IPR031157">
    <property type="entry name" value="G_TR_CS"/>
</dbReference>
<dbReference type="InterPro" id="IPR027417">
    <property type="entry name" value="P-loop_NTPase"/>
</dbReference>
<dbReference type="InterPro" id="IPR020568">
    <property type="entry name" value="Ribosomal_Su5_D2-typ_SF"/>
</dbReference>
<dbReference type="InterPro" id="IPR014721">
    <property type="entry name" value="Ribsml_uS5_D2-typ_fold_subgr"/>
</dbReference>
<dbReference type="InterPro" id="IPR005225">
    <property type="entry name" value="Small_GTP-bd"/>
</dbReference>
<dbReference type="InterPro" id="IPR000795">
    <property type="entry name" value="T_Tr_GTP-bd_dom"/>
</dbReference>
<dbReference type="InterPro" id="IPR009000">
    <property type="entry name" value="Transl_B-barrel_sf"/>
</dbReference>
<dbReference type="InterPro" id="IPR004540">
    <property type="entry name" value="Transl_elong_EFG/EF2"/>
</dbReference>
<dbReference type="InterPro" id="IPR005517">
    <property type="entry name" value="Transl_elong_EFG/EF2_IV"/>
</dbReference>
<dbReference type="NCBIfam" id="TIGR00484">
    <property type="entry name" value="EF-G"/>
    <property type="match status" value="1"/>
</dbReference>
<dbReference type="NCBIfam" id="NF009379">
    <property type="entry name" value="PRK12740.1-3"/>
    <property type="match status" value="1"/>
</dbReference>
<dbReference type="NCBIfam" id="NF009381">
    <property type="entry name" value="PRK12740.1-5"/>
    <property type="match status" value="1"/>
</dbReference>
<dbReference type="NCBIfam" id="TIGR00231">
    <property type="entry name" value="small_GTP"/>
    <property type="match status" value="1"/>
</dbReference>
<dbReference type="PANTHER" id="PTHR43261:SF1">
    <property type="entry name" value="RIBOSOME-RELEASING FACTOR 2, MITOCHONDRIAL"/>
    <property type="match status" value="1"/>
</dbReference>
<dbReference type="PANTHER" id="PTHR43261">
    <property type="entry name" value="TRANSLATION ELONGATION FACTOR G-RELATED"/>
    <property type="match status" value="1"/>
</dbReference>
<dbReference type="Pfam" id="PF22042">
    <property type="entry name" value="EF-G_D2"/>
    <property type="match status" value="1"/>
</dbReference>
<dbReference type="Pfam" id="PF00679">
    <property type="entry name" value="EFG_C"/>
    <property type="match status" value="1"/>
</dbReference>
<dbReference type="Pfam" id="PF14492">
    <property type="entry name" value="EFG_III"/>
    <property type="match status" value="1"/>
</dbReference>
<dbReference type="Pfam" id="PF03764">
    <property type="entry name" value="EFG_IV"/>
    <property type="match status" value="1"/>
</dbReference>
<dbReference type="Pfam" id="PF00009">
    <property type="entry name" value="GTP_EFTU"/>
    <property type="match status" value="1"/>
</dbReference>
<dbReference type="PRINTS" id="PR00315">
    <property type="entry name" value="ELONGATNFCT"/>
</dbReference>
<dbReference type="SMART" id="SM00838">
    <property type="entry name" value="EFG_C"/>
    <property type="match status" value="1"/>
</dbReference>
<dbReference type="SMART" id="SM00889">
    <property type="entry name" value="EFG_IV"/>
    <property type="match status" value="1"/>
</dbReference>
<dbReference type="SUPFAM" id="SSF54980">
    <property type="entry name" value="EF-G C-terminal domain-like"/>
    <property type="match status" value="2"/>
</dbReference>
<dbReference type="SUPFAM" id="SSF52540">
    <property type="entry name" value="P-loop containing nucleoside triphosphate hydrolases"/>
    <property type="match status" value="1"/>
</dbReference>
<dbReference type="SUPFAM" id="SSF54211">
    <property type="entry name" value="Ribosomal protein S5 domain 2-like"/>
    <property type="match status" value="1"/>
</dbReference>
<dbReference type="SUPFAM" id="SSF50447">
    <property type="entry name" value="Translation proteins"/>
    <property type="match status" value="1"/>
</dbReference>
<dbReference type="PROSITE" id="PS00301">
    <property type="entry name" value="G_TR_1"/>
    <property type="match status" value="1"/>
</dbReference>
<dbReference type="PROSITE" id="PS51722">
    <property type="entry name" value="G_TR_2"/>
    <property type="match status" value="1"/>
</dbReference>
<protein>
    <recommendedName>
        <fullName evidence="1">Elongation factor G</fullName>
        <shortName evidence="1">EF-G</shortName>
    </recommendedName>
</protein>
<proteinExistence type="inferred from homology"/>
<accession>A7GJ77</accession>
<keyword id="KW-0963">Cytoplasm</keyword>
<keyword id="KW-0251">Elongation factor</keyword>
<keyword id="KW-0342">GTP-binding</keyword>
<keyword id="KW-0547">Nucleotide-binding</keyword>
<keyword id="KW-0648">Protein biosynthesis</keyword>
<sequence length="689" mass="76427">MANKEYPLAKFRNIGIMAHIDAGKTTATERILFYTGKTHKIGETHEGAATMDWMEQEQERGITITSAATTCFWKDHQVNIIDTPGHVDFTVEVERSLRVLDGAVTILDAKSGVEPQTETVWRQADNYKVPRMVFINKMDKLGADFLMSVGTLRERLHANAVPLQLPIGAEDSFSGIIDLVKNDAIIYKDDLGTVMDETEIPEDMKEMAEEYRTMLLEAVAEVDEDIMMKYLEGEEISVEEIKTALRKGVLANKIVPVLCGSAYKNKGVQLLLDAIIEFMPSPLDIEDVKGTEPTTGEEMTRPADAKAPLAALAFKIATDPFIGKLAFTRIYSGTMKSGTYVFNSNKGKRERIGRLVKMHANHREDVEELKAGELGAIVGLKDTTTGDTLCDDADPIILENMEFPEPVIDVSIEPKTKAGQEKMGIALAKLAEEDPTFRTYTNQETGQTIIAGMGELHLEIIVDRLIREFKVECNVGQPQVAYKETIKKHVKAEGKFIRQSGGRGQYGHCWIEMMPTEGEYEFQNAVVGGSIPKEYIPAIDNGIQEASQSGIIAGYPVINFKVKLFDGSYHDVDSSEMAFKIAGSMAFKNAMSKADAVLLEPSMKVEVVVPEEYMGDVIGDINSRRGRIEGMTPRAGAEVIRAFVPLSEMFGYATTLRSKTQGRGNYVMQFDHYEEVPKSIQDKVIGERK</sequence>
<gene>
    <name evidence="1" type="primary">fusA</name>
    <name type="ordered locus">CLI_3666</name>
</gene>
<evidence type="ECO:0000255" key="1">
    <source>
        <dbReference type="HAMAP-Rule" id="MF_00054"/>
    </source>
</evidence>
<organism>
    <name type="scientific">Clostridium botulinum (strain Langeland / NCTC 10281 / Type F)</name>
    <dbReference type="NCBI Taxonomy" id="441772"/>
    <lineage>
        <taxon>Bacteria</taxon>
        <taxon>Bacillati</taxon>
        <taxon>Bacillota</taxon>
        <taxon>Clostridia</taxon>
        <taxon>Eubacteriales</taxon>
        <taxon>Clostridiaceae</taxon>
        <taxon>Clostridium</taxon>
    </lineage>
</organism>
<reference key="1">
    <citation type="submission" date="2007-06" db="EMBL/GenBank/DDBJ databases">
        <authorList>
            <person name="Brinkac L.M."/>
            <person name="Daugherty S."/>
            <person name="Dodson R.J."/>
            <person name="Madupu R."/>
            <person name="Brown J.L."/>
            <person name="Bruce D."/>
            <person name="Detter C."/>
            <person name="Munk C."/>
            <person name="Smith L.A."/>
            <person name="Smith T.J."/>
            <person name="White O."/>
            <person name="Brettin T.S."/>
        </authorList>
    </citation>
    <scope>NUCLEOTIDE SEQUENCE [LARGE SCALE GENOMIC DNA]</scope>
    <source>
        <strain>Langeland / NCTC 10281 / Type F</strain>
    </source>
</reference>
<comment type="function">
    <text evidence="1">Catalyzes the GTP-dependent ribosomal translocation step during translation elongation. During this step, the ribosome changes from the pre-translocational (PRE) to the post-translocational (POST) state as the newly formed A-site-bound peptidyl-tRNA and P-site-bound deacylated tRNA move to the P and E sites, respectively. Catalyzes the coordinated movement of the two tRNA molecules, the mRNA and conformational changes in the ribosome.</text>
</comment>
<comment type="subcellular location">
    <subcellularLocation>
        <location evidence="1">Cytoplasm</location>
    </subcellularLocation>
</comment>
<comment type="similarity">
    <text evidence="1">Belongs to the TRAFAC class translation factor GTPase superfamily. Classic translation factor GTPase family. EF-G/EF-2 subfamily.</text>
</comment>